<accession>A7HQ17</accession>
<reference key="1">
    <citation type="journal article" date="2011" name="Stand. Genomic Sci.">
        <title>Complete genome sequence of Parvibaculum lavamentivorans type strain (DS-1(T)).</title>
        <authorList>
            <person name="Schleheck D."/>
            <person name="Weiss M."/>
            <person name="Pitluck S."/>
            <person name="Bruce D."/>
            <person name="Land M.L."/>
            <person name="Han S."/>
            <person name="Saunders E."/>
            <person name="Tapia R."/>
            <person name="Detter C."/>
            <person name="Brettin T."/>
            <person name="Han J."/>
            <person name="Woyke T."/>
            <person name="Goodwin L."/>
            <person name="Pennacchio L."/>
            <person name="Nolan M."/>
            <person name="Cook A.M."/>
            <person name="Kjelleberg S."/>
            <person name="Thomas T."/>
        </authorList>
    </citation>
    <scope>NUCLEOTIDE SEQUENCE [LARGE SCALE GENOMIC DNA]</scope>
    <source>
        <strain>DS-1 / DSM 13023 / NCIMB 13966</strain>
    </source>
</reference>
<name>Y377_PARL1</name>
<keyword id="KW-0223">Dioxygenase</keyword>
<keyword id="KW-0408">Iron</keyword>
<keyword id="KW-0479">Metal-binding</keyword>
<keyword id="KW-0560">Oxidoreductase</keyword>
<keyword id="KW-1185">Reference proteome</keyword>
<keyword id="KW-0847">Vitamin C</keyword>
<dbReference type="EC" id="1.14.11.-" evidence="1"/>
<dbReference type="EMBL" id="CP000774">
    <property type="protein sequence ID" value="ABS62000.1"/>
    <property type="molecule type" value="Genomic_DNA"/>
</dbReference>
<dbReference type="RefSeq" id="WP_011995291.1">
    <property type="nucleotide sequence ID" value="NC_009719.1"/>
</dbReference>
<dbReference type="SMR" id="A7HQ17"/>
<dbReference type="STRING" id="402881.Plav_0377"/>
<dbReference type="KEGG" id="pla:Plav_0377"/>
<dbReference type="eggNOG" id="COG3128">
    <property type="taxonomic scope" value="Bacteria"/>
</dbReference>
<dbReference type="HOGENOM" id="CLU_106663_0_0_5"/>
<dbReference type="OrthoDB" id="9812472at2"/>
<dbReference type="Proteomes" id="UP000006377">
    <property type="component" value="Chromosome"/>
</dbReference>
<dbReference type="GO" id="GO:0016706">
    <property type="term" value="F:2-oxoglutarate-dependent dioxygenase activity"/>
    <property type="evidence" value="ECO:0007669"/>
    <property type="project" value="UniProtKB-UniRule"/>
</dbReference>
<dbReference type="GO" id="GO:0005506">
    <property type="term" value="F:iron ion binding"/>
    <property type="evidence" value="ECO:0007669"/>
    <property type="project" value="UniProtKB-UniRule"/>
</dbReference>
<dbReference type="GO" id="GO:0031418">
    <property type="term" value="F:L-ascorbic acid binding"/>
    <property type="evidence" value="ECO:0007669"/>
    <property type="project" value="UniProtKB-KW"/>
</dbReference>
<dbReference type="GO" id="GO:0006974">
    <property type="term" value="P:DNA damage response"/>
    <property type="evidence" value="ECO:0007669"/>
    <property type="project" value="TreeGrafter"/>
</dbReference>
<dbReference type="GO" id="GO:0006879">
    <property type="term" value="P:intracellular iron ion homeostasis"/>
    <property type="evidence" value="ECO:0007669"/>
    <property type="project" value="TreeGrafter"/>
</dbReference>
<dbReference type="Gene3D" id="2.60.120.620">
    <property type="entry name" value="q2cbj1_9rhob like domain"/>
    <property type="match status" value="1"/>
</dbReference>
<dbReference type="Gene3D" id="4.10.860.20">
    <property type="entry name" value="Rabenosyn, Rab binding domain"/>
    <property type="match status" value="1"/>
</dbReference>
<dbReference type="HAMAP" id="MF_00657">
    <property type="entry name" value="Hydroxyl_YbiX"/>
    <property type="match status" value="1"/>
</dbReference>
<dbReference type="InterPro" id="IPR005123">
    <property type="entry name" value="Oxoglu/Fe-dep_dioxygenase_dom"/>
</dbReference>
<dbReference type="InterPro" id="IPR041097">
    <property type="entry name" value="PKHD_C"/>
</dbReference>
<dbReference type="InterPro" id="IPR023550">
    <property type="entry name" value="PKHD_hydroxylase"/>
</dbReference>
<dbReference type="InterPro" id="IPR006620">
    <property type="entry name" value="Pro_4_hyd_alph"/>
</dbReference>
<dbReference type="InterPro" id="IPR044862">
    <property type="entry name" value="Pro_4_hyd_alph_FE2OG_OXY"/>
</dbReference>
<dbReference type="NCBIfam" id="NF003974">
    <property type="entry name" value="PRK05467.1-3"/>
    <property type="match status" value="1"/>
</dbReference>
<dbReference type="NCBIfam" id="NF003975">
    <property type="entry name" value="PRK05467.1-4"/>
    <property type="match status" value="1"/>
</dbReference>
<dbReference type="PANTHER" id="PTHR41536">
    <property type="entry name" value="PKHD-TYPE HYDROXYLASE YBIX"/>
    <property type="match status" value="1"/>
</dbReference>
<dbReference type="PANTHER" id="PTHR41536:SF1">
    <property type="entry name" value="PKHD-TYPE HYDROXYLASE YBIX"/>
    <property type="match status" value="1"/>
</dbReference>
<dbReference type="Pfam" id="PF13640">
    <property type="entry name" value="2OG-FeII_Oxy_3"/>
    <property type="match status" value="1"/>
</dbReference>
<dbReference type="Pfam" id="PF18331">
    <property type="entry name" value="PKHD_C"/>
    <property type="match status" value="1"/>
</dbReference>
<dbReference type="SMART" id="SM00702">
    <property type="entry name" value="P4Hc"/>
    <property type="match status" value="1"/>
</dbReference>
<dbReference type="SUPFAM" id="SSF51197">
    <property type="entry name" value="Clavaminate synthase-like"/>
    <property type="match status" value="1"/>
</dbReference>
<dbReference type="PROSITE" id="PS51471">
    <property type="entry name" value="FE2OG_OXY"/>
    <property type="match status" value="1"/>
</dbReference>
<proteinExistence type="inferred from homology"/>
<protein>
    <recommendedName>
        <fullName evidence="1">PKHD-type hydroxylase Plav_0377</fullName>
        <ecNumber evidence="1">1.14.11.-</ecNumber>
    </recommendedName>
</protein>
<comment type="cofactor">
    <cofactor evidence="1">
        <name>Fe(2+)</name>
        <dbReference type="ChEBI" id="CHEBI:29033"/>
    </cofactor>
    <text evidence="1">Binds 1 Fe(2+) ion per subunit.</text>
</comment>
<comment type="cofactor">
    <cofactor evidence="1">
        <name>L-ascorbate</name>
        <dbReference type="ChEBI" id="CHEBI:38290"/>
    </cofactor>
</comment>
<evidence type="ECO:0000255" key="1">
    <source>
        <dbReference type="HAMAP-Rule" id="MF_00657"/>
    </source>
</evidence>
<feature type="chain" id="PRO_1000072700" description="PKHD-type hydroxylase Plav_0377">
    <location>
        <begin position="1"/>
        <end position="226"/>
    </location>
</feature>
<feature type="domain" description="Fe2OG dioxygenase" evidence="1">
    <location>
        <begin position="78"/>
        <end position="178"/>
    </location>
</feature>
<feature type="binding site" evidence="1">
    <location>
        <position position="96"/>
    </location>
    <ligand>
        <name>Fe cation</name>
        <dbReference type="ChEBI" id="CHEBI:24875"/>
    </ligand>
</feature>
<feature type="binding site" evidence="1">
    <location>
        <position position="98"/>
    </location>
    <ligand>
        <name>Fe cation</name>
        <dbReference type="ChEBI" id="CHEBI:24875"/>
    </ligand>
</feature>
<feature type="binding site" evidence="1">
    <location>
        <position position="159"/>
    </location>
    <ligand>
        <name>Fe cation</name>
        <dbReference type="ChEBI" id="CHEBI:24875"/>
    </ligand>
</feature>
<feature type="binding site" evidence="1">
    <location>
        <position position="169"/>
    </location>
    <ligand>
        <name>2-oxoglutarate</name>
        <dbReference type="ChEBI" id="CHEBI:16810"/>
    </ligand>
</feature>
<sequence length="226" mass="25150">MMLEIPDVLTSAQLRQCREALEKAAWQDGRQTAGHMAAQAKNNQQLAQDDPLSVELGEFLLDRLGKTDRFIAAALPLKVLPPRFNRYSGGGNYGNHVDAAIFSVPGTPHRIRSDISATLFFSEPDEYEGGELIVEDTYGSHAIKLPAGHMVLYPGTSLHRVAPVTKGVRLASFFWVQSLVREDSQRAMLWELDGAIQRVTLDTPESPALPQLMALYHNLLRRWSNT</sequence>
<gene>
    <name type="ordered locus">Plav_0377</name>
</gene>
<organism>
    <name type="scientific">Parvibaculum lavamentivorans (strain DS-1 / DSM 13023 / NCIMB 13966)</name>
    <dbReference type="NCBI Taxonomy" id="402881"/>
    <lineage>
        <taxon>Bacteria</taxon>
        <taxon>Pseudomonadati</taxon>
        <taxon>Pseudomonadota</taxon>
        <taxon>Alphaproteobacteria</taxon>
        <taxon>Hyphomicrobiales</taxon>
        <taxon>Parvibaculaceae</taxon>
        <taxon>Parvibaculum</taxon>
    </lineage>
</organism>